<organism>
    <name type="scientific">Podospora anserina</name>
    <name type="common">Pleurage anserina</name>
    <dbReference type="NCBI Taxonomy" id="2587412"/>
    <lineage>
        <taxon>Eukaryota</taxon>
        <taxon>Fungi</taxon>
        <taxon>Dikarya</taxon>
        <taxon>Ascomycota</taxon>
        <taxon>Pezizomycotina</taxon>
        <taxon>Sordariomycetes</taxon>
        <taxon>Sordariomycetidae</taxon>
        <taxon>Sordariales</taxon>
        <taxon>Podosporaceae</taxon>
        <taxon>Podospora</taxon>
    </lineage>
</organism>
<name>PYRE_PODAS</name>
<gene>
    <name type="primary">URA5</name>
</gene>
<keyword id="KW-0328">Glycosyltransferase</keyword>
<keyword id="KW-0665">Pyrimidine biosynthesis</keyword>
<keyword id="KW-0808">Transferase</keyword>
<reference key="1">
    <citation type="journal article" date="1987" name="Gene">
        <title>The ura5 gene of the filamentous fungus Podospora anserina: nucleotide sequence and expression in transformed strains.</title>
        <authorList>
            <person name="Turcq B."/>
            <person name="Begueret J."/>
        </authorList>
    </citation>
    <scope>NUCLEOTIDE SEQUENCE [GENOMIC DNA]</scope>
</reference>
<feature type="chain" id="PRO_0000110799" description="Orotate phosphoribosyltransferase">
    <location>
        <begin position="1"/>
        <end position="231"/>
    </location>
</feature>
<feature type="binding site" description="in other chain" evidence="1">
    <location>
        <position position="29"/>
    </location>
    <ligand>
        <name>5-phospho-alpha-D-ribose 1-diphosphate</name>
        <dbReference type="ChEBI" id="CHEBI:58017"/>
        <note>ligand shared between dimeric partners</note>
    </ligand>
</feature>
<feature type="binding site" evidence="1">
    <location>
        <begin position="37"/>
        <end position="38"/>
    </location>
    <ligand>
        <name>orotate</name>
        <dbReference type="ChEBI" id="CHEBI:30839"/>
    </ligand>
</feature>
<feature type="binding site" description="in other chain" evidence="1">
    <location>
        <begin position="75"/>
        <end position="76"/>
    </location>
    <ligand>
        <name>5-phospho-alpha-D-ribose 1-diphosphate</name>
        <dbReference type="ChEBI" id="CHEBI:58017"/>
        <note>ligand shared between dimeric partners</note>
    </ligand>
</feature>
<feature type="binding site" evidence="1">
    <location>
        <position position="107"/>
    </location>
    <ligand>
        <name>5-phospho-alpha-D-ribose 1-diphosphate</name>
        <dbReference type="ChEBI" id="CHEBI:58017"/>
        <note>ligand shared between dimeric partners</note>
    </ligand>
</feature>
<feature type="binding site" description="in other chain" evidence="1">
    <location>
        <position position="108"/>
    </location>
    <ligand>
        <name>5-phospho-alpha-D-ribose 1-diphosphate</name>
        <dbReference type="ChEBI" id="CHEBI:58017"/>
        <note>ligand shared between dimeric partners</note>
    </ligand>
</feature>
<feature type="binding site" evidence="1">
    <location>
        <position position="111"/>
    </location>
    <ligand>
        <name>5-phospho-alpha-D-ribose 1-diphosphate</name>
        <dbReference type="ChEBI" id="CHEBI:58017"/>
        <note>ligand shared between dimeric partners</note>
    </ligand>
</feature>
<feature type="binding site" evidence="1">
    <location>
        <position position="113"/>
    </location>
    <ligand>
        <name>5-phospho-alpha-D-ribose 1-diphosphate</name>
        <dbReference type="ChEBI" id="CHEBI:58017"/>
        <note>ligand shared between dimeric partners</note>
    </ligand>
</feature>
<feature type="binding site" description="in other chain" evidence="1">
    <location>
        <begin position="133"/>
        <end position="141"/>
    </location>
    <ligand>
        <name>5-phospho-alpha-D-ribose 1-diphosphate</name>
        <dbReference type="ChEBI" id="CHEBI:58017"/>
        <note>ligand shared between dimeric partners</note>
    </ligand>
</feature>
<feature type="binding site" evidence="1">
    <location>
        <position position="137"/>
    </location>
    <ligand>
        <name>orotate</name>
        <dbReference type="ChEBI" id="CHEBI:30839"/>
    </ligand>
</feature>
<feature type="binding site" evidence="1">
    <location>
        <position position="165"/>
    </location>
    <ligand>
        <name>orotate</name>
        <dbReference type="ChEBI" id="CHEBI:30839"/>
    </ligand>
</feature>
<accession>P08309</accession>
<protein>
    <recommendedName>
        <fullName>Orotate phosphoribosyltransferase</fullName>
        <shortName>OPRT</shortName>
        <shortName>OPRTase</shortName>
        <ecNumber>2.4.2.10</ecNumber>
    </recommendedName>
</protein>
<evidence type="ECO:0000250" key="1"/>
<evidence type="ECO:0000305" key="2"/>
<sequence>MSELPQYKKDFLKSAIDGNILKFGSFLLKSGRTSPYFFNAGDFYRADLLNSISTAYALTIDSLPIQYDIIFGPAYKGIPLATAATIKLGQIRPRAKYAVGRVLVRDRKEAKDHGEGGNIVGAPLKGKRVLIVDDVISRCTAKREPSPRLEKEGGIVAGIVVALDRMEKLPAKDGDDSKPGPSALGELKKEYNLPIYAILTLDDIIEGIKGLVGEEDIKRTEEYREKYKATD</sequence>
<dbReference type="EC" id="2.4.2.10"/>
<dbReference type="EMBL" id="M16697">
    <property type="protein sequence ID" value="AAA33624.1"/>
    <property type="molecule type" value="Genomic_DNA"/>
</dbReference>
<dbReference type="PIR" id="A29459">
    <property type="entry name" value="A29459"/>
</dbReference>
<dbReference type="SMR" id="P08309"/>
<dbReference type="VEuPathDB" id="FungiDB:PODANS_3_4280"/>
<dbReference type="UniPathway" id="UPA00070">
    <property type="reaction ID" value="UER00119"/>
</dbReference>
<dbReference type="GO" id="GO:0005737">
    <property type="term" value="C:cytoplasm"/>
    <property type="evidence" value="ECO:0007669"/>
    <property type="project" value="TreeGrafter"/>
</dbReference>
<dbReference type="GO" id="GO:0004588">
    <property type="term" value="F:orotate phosphoribosyltransferase activity"/>
    <property type="evidence" value="ECO:0007669"/>
    <property type="project" value="UniProtKB-EC"/>
</dbReference>
<dbReference type="GO" id="GO:0006207">
    <property type="term" value="P:'de novo' pyrimidine nucleobase biosynthetic process"/>
    <property type="evidence" value="ECO:0007669"/>
    <property type="project" value="TreeGrafter"/>
</dbReference>
<dbReference type="GO" id="GO:0044205">
    <property type="term" value="P:'de novo' UMP biosynthetic process"/>
    <property type="evidence" value="ECO:0007669"/>
    <property type="project" value="UniProtKB-UniPathway"/>
</dbReference>
<dbReference type="GO" id="GO:0046132">
    <property type="term" value="P:pyrimidine ribonucleoside biosynthetic process"/>
    <property type="evidence" value="ECO:0007669"/>
    <property type="project" value="TreeGrafter"/>
</dbReference>
<dbReference type="CDD" id="cd06223">
    <property type="entry name" value="PRTases_typeI"/>
    <property type="match status" value="1"/>
</dbReference>
<dbReference type="Gene3D" id="3.40.50.2020">
    <property type="match status" value="1"/>
</dbReference>
<dbReference type="HAMAP" id="MF_01208">
    <property type="entry name" value="PyrE"/>
    <property type="match status" value="1"/>
</dbReference>
<dbReference type="InterPro" id="IPR023031">
    <property type="entry name" value="OPRT"/>
</dbReference>
<dbReference type="InterPro" id="IPR004467">
    <property type="entry name" value="Or_phspho_trans_dom"/>
</dbReference>
<dbReference type="InterPro" id="IPR000836">
    <property type="entry name" value="PRibTrfase_dom"/>
</dbReference>
<dbReference type="InterPro" id="IPR029057">
    <property type="entry name" value="PRTase-like"/>
</dbReference>
<dbReference type="NCBIfam" id="TIGR00336">
    <property type="entry name" value="pyrE"/>
    <property type="match status" value="1"/>
</dbReference>
<dbReference type="PANTHER" id="PTHR46683">
    <property type="entry name" value="OROTATE PHOSPHORIBOSYLTRANSFERASE 1-RELATED"/>
    <property type="match status" value="1"/>
</dbReference>
<dbReference type="PANTHER" id="PTHR46683:SF1">
    <property type="entry name" value="OROTATE PHOSPHORIBOSYLTRANSFERASE 1-RELATED"/>
    <property type="match status" value="1"/>
</dbReference>
<dbReference type="Pfam" id="PF00156">
    <property type="entry name" value="Pribosyltran"/>
    <property type="match status" value="1"/>
</dbReference>
<dbReference type="SUPFAM" id="SSF53271">
    <property type="entry name" value="PRTase-like"/>
    <property type="match status" value="1"/>
</dbReference>
<dbReference type="PROSITE" id="PS00103">
    <property type="entry name" value="PUR_PYR_PR_TRANSFER"/>
    <property type="match status" value="1"/>
</dbReference>
<comment type="function">
    <text evidence="1">Catalyzes the transfer of a ribosyl phosphate group from 5-phosphoribose 1-diphosphate to orotate, leading to the formation of orotidine monophosphate (OMP).</text>
</comment>
<comment type="catalytic activity">
    <reaction>
        <text>orotidine 5'-phosphate + diphosphate = orotate + 5-phospho-alpha-D-ribose 1-diphosphate</text>
        <dbReference type="Rhea" id="RHEA:10380"/>
        <dbReference type="ChEBI" id="CHEBI:30839"/>
        <dbReference type="ChEBI" id="CHEBI:33019"/>
        <dbReference type="ChEBI" id="CHEBI:57538"/>
        <dbReference type="ChEBI" id="CHEBI:58017"/>
        <dbReference type="EC" id="2.4.2.10"/>
    </reaction>
</comment>
<comment type="pathway">
    <text>Pyrimidine metabolism; UMP biosynthesis via de novo pathway; UMP from orotate: step 1/2.</text>
</comment>
<comment type="subunit">
    <text evidence="1">Homodimer.</text>
</comment>
<comment type="similarity">
    <text evidence="2">Belongs to the purine/pyrimidine phosphoribosyltransferase family. PyrE subfamily.</text>
</comment>
<proteinExistence type="inferred from homology"/>